<keyword id="KW-0067">ATP-binding</keyword>
<keyword id="KW-0436">Ligase</keyword>
<keyword id="KW-0547">Nucleotide-binding</keyword>
<keyword id="KW-0648">Protein biosynthesis</keyword>
<name>GATA_RHOPS</name>
<comment type="function">
    <text evidence="1">Allows the formation of correctly charged Gln-tRNA(Gln) through the transamidation of misacylated Glu-tRNA(Gln) in organisms which lack glutaminyl-tRNA synthetase. The reaction takes place in the presence of glutamine and ATP through an activated gamma-phospho-Glu-tRNA(Gln).</text>
</comment>
<comment type="catalytic activity">
    <reaction evidence="1">
        <text>L-glutamyl-tRNA(Gln) + L-glutamine + ATP + H2O = L-glutaminyl-tRNA(Gln) + L-glutamate + ADP + phosphate + H(+)</text>
        <dbReference type="Rhea" id="RHEA:17521"/>
        <dbReference type="Rhea" id="RHEA-COMP:9681"/>
        <dbReference type="Rhea" id="RHEA-COMP:9684"/>
        <dbReference type="ChEBI" id="CHEBI:15377"/>
        <dbReference type="ChEBI" id="CHEBI:15378"/>
        <dbReference type="ChEBI" id="CHEBI:29985"/>
        <dbReference type="ChEBI" id="CHEBI:30616"/>
        <dbReference type="ChEBI" id="CHEBI:43474"/>
        <dbReference type="ChEBI" id="CHEBI:58359"/>
        <dbReference type="ChEBI" id="CHEBI:78520"/>
        <dbReference type="ChEBI" id="CHEBI:78521"/>
        <dbReference type="ChEBI" id="CHEBI:456216"/>
        <dbReference type="EC" id="6.3.5.7"/>
    </reaction>
</comment>
<comment type="subunit">
    <text evidence="1">Heterotrimer of A, B and C subunits.</text>
</comment>
<comment type="similarity">
    <text evidence="1">Belongs to the amidase family. GatA subfamily.</text>
</comment>
<evidence type="ECO:0000255" key="1">
    <source>
        <dbReference type="HAMAP-Rule" id="MF_00120"/>
    </source>
</evidence>
<dbReference type="EC" id="6.3.5.7" evidence="1"/>
<dbReference type="EMBL" id="CP000283">
    <property type="protein sequence ID" value="ABE40242.1"/>
    <property type="molecule type" value="Genomic_DNA"/>
</dbReference>
<dbReference type="SMR" id="Q135J7"/>
<dbReference type="STRING" id="316057.RPD_3016"/>
<dbReference type="KEGG" id="rpd:RPD_3016"/>
<dbReference type="eggNOG" id="COG0154">
    <property type="taxonomic scope" value="Bacteria"/>
</dbReference>
<dbReference type="HOGENOM" id="CLU_009600_0_3_5"/>
<dbReference type="BioCyc" id="RPAL316057:RPD_RS15145-MONOMER"/>
<dbReference type="Proteomes" id="UP000001818">
    <property type="component" value="Chromosome"/>
</dbReference>
<dbReference type="GO" id="GO:0030956">
    <property type="term" value="C:glutamyl-tRNA(Gln) amidotransferase complex"/>
    <property type="evidence" value="ECO:0007669"/>
    <property type="project" value="InterPro"/>
</dbReference>
<dbReference type="GO" id="GO:0005524">
    <property type="term" value="F:ATP binding"/>
    <property type="evidence" value="ECO:0007669"/>
    <property type="project" value="UniProtKB-KW"/>
</dbReference>
<dbReference type="GO" id="GO:0050567">
    <property type="term" value="F:glutaminyl-tRNA synthase (glutamine-hydrolyzing) activity"/>
    <property type="evidence" value="ECO:0007669"/>
    <property type="project" value="UniProtKB-UniRule"/>
</dbReference>
<dbReference type="GO" id="GO:0006412">
    <property type="term" value="P:translation"/>
    <property type="evidence" value="ECO:0007669"/>
    <property type="project" value="UniProtKB-UniRule"/>
</dbReference>
<dbReference type="Gene3D" id="3.90.1300.10">
    <property type="entry name" value="Amidase signature (AS) domain"/>
    <property type="match status" value="1"/>
</dbReference>
<dbReference type="HAMAP" id="MF_00120">
    <property type="entry name" value="GatA"/>
    <property type="match status" value="1"/>
</dbReference>
<dbReference type="InterPro" id="IPR000120">
    <property type="entry name" value="Amidase"/>
</dbReference>
<dbReference type="InterPro" id="IPR020556">
    <property type="entry name" value="Amidase_CS"/>
</dbReference>
<dbReference type="InterPro" id="IPR023631">
    <property type="entry name" value="Amidase_dom"/>
</dbReference>
<dbReference type="InterPro" id="IPR036928">
    <property type="entry name" value="AS_sf"/>
</dbReference>
<dbReference type="InterPro" id="IPR004412">
    <property type="entry name" value="GatA"/>
</dbReference>
<dbReference type="NCBIfam" id="TIGR00132">
    <property type="entry name" value="gatA"/>
    <property type="match status" value="1"/>
</dbReference>
<dbReference type="PANTHER" id="PTHR11895:SF151">
    <property type="entry name" value="GLUTAMYL-TRNA(GLN) AMIDOTRANSFERASE SUBUNIT A"/>
    <property type="match status" value="1"/>
</dbReference>
<dbReference type="PANTHER" id="PTHR11895">
    <property type="entry name" value="TRANSAMIDASE"/>
    <property type="match status" value="1"/>
</dbReference>
<dbReference type="Pfam" id="PF01425">
    <property type="entry name" value="Amidase"/>
    <property type="match status" value="1"/>
</dbReference>
<dbReference type="SUPFAM" id="SSF75304">
    <property type="entry name" value="Amidase signature (AS) enzymes"/>
    <property type="match status" value="1"/>
</dbReference>
<dbReference type="PROSITE" id="PS00571">
    <property type="entry name" value="AMIDASES"/>
    <property type="match status" value="1"/>
</dbReference>
<reference key="1">
    <citation type="submission" date="2006-03" db="EMBL/GenBank/DDBJ databases">
        <title>Complete sequence of Rhodopseudomonas palustris BisB5.</title>
        <authorList>
            <consortium name="US DOE Joint Genome Institute"/>
            <person name="Copeland A."/>
            <person name="Lucas S."/>
            <person name="Lapidus A."/>
            <person name="Barry K."/>
            <person name="Detter J.C."/>
            <person name="Glavina del Rio T."/>
            <person name="Hammon N."/>
            <person name="Israni S."/>
            <person name="Dalin E."/>
            <person name="Tice H."/>
            <person name="Pitluck S."/>
            <person name="Chain P."/>
            <person name="Malfatti S."/>
            <person name="Shin M."/>
            <person name="Vergez L."/>
            <person name="Schmutz J."/>
            <person name="Larimer F."/>
            <person name="Land M."/>
            <person name="Hauser L."/>
            <person name="Pelletier D.A."/>
            <person name="Kyrpides N."/>
            <person name="Lykidis A."/>
            <person name="Oda Y."/>
            <person name="Harwood C.S."/>
            <person name="Richardson P."/>
        </authorList>
    </citation>
    <scope>NUCLEOTIDE SEQUENCE [LARGE SCALE GENOMIC DNA]</scope>
    <source>
        <strain>BisB5</strain>
    </source>
</reference>
<accession>Q135J7</accession>
<feature type="chain" id="PRO_1000015894" description="Glutamyl-tRNA(Gln) amidotransferase subunit A">
    <location>
        <begin position="1"/>
        <end position="492"/>
    </location>
</feature>
<feature type="active site" description="Charge relay system" evidence="1">
    <location>
        <position position="78"/>
    </location>
</feature>
<feature type="active site" description="Charge relay system" evidence="1">
    <location>
        <position position="158"/>
    </location>
</feature>
<feature type="active site" description="Acyl-ester intermediate" evidence="1">
    <location>
        <position position="182"/>
    </location>
</feature>
<protein>
    <recommendedName>
        <fullName evidence="1">Glutamyl-tRNA(Gln) amidotransferase subunit A</fullName>
        <shortName evidence="1">Glu-ADT subunit A</shortName>
        <ecNumber evidence="1">6.3.5.7</ecNumber>
    </recommendedName>
</protein>
<gene>
    <name evidence="1" type="primary">gatA</name>
    <name type="ordered locus">RPD_3016</name>
</gene>
<sequence>MTDLTSLTLAEARDGLARKSFTALELTEAHLTAIEAARGLNAFVLETPEQARKMAQAADAQIATGDGGPLAGIPLGIKDLFATKDTRTTACSKILGDFHPPYESTVTTQLWRDGAVMVGKLNNDEFAMGSSNETSCFGPVVNPWRRAGSETKLVPGGSSGGSAAAVAAGLCLGATATDTGGSIRQPAAFTGTVGIKPTYGRCSRWGIVAFASSLDQAGPIARTVRDSAILLRSMAGHDPKDTTSVDRPVPNYETAIGASVKGMKIGIPKEYRLEGMPPEIERLWTQGAEWLKASGAELVEVSLPHTKYALPAYYIVAPAEASSNLARYDGVRYGARVNGRNIVEMYENTRAAGFGAEVKRRIMIGTYVLSAGYYDAYYLRAQKVRTLIKRDFEQCFDQGVSAILTPATPSAAFGIGEKGGADPVEMYLNDIFTVTVNMAGLPGIAVPAGADGQGLPLGLQLIGRPFDEETLFSLGEVIEQAAGRFTPKKWWA</sequence>
<organism>
    <name type="scientific">Rhodopseudomonas palustris (strain BisB5)</name>
    <dbReference type="NCBI Taxonomy" id="316057"/>
    <lineage>
        <taxon>Bacteria</taxon>
        <taxon>Pseudomonadati</taxon>
        <taxon>Pseudomonadota</taxon>
        <taxon>Alphaproteobacteria</taxon>
        <taxon>Hyphomicrobiales</taxon>
        <taxon>Nitrobacteraceae</taxon>
        <taxon>Rhodopseudomonas</taxon>
    </lineage>
</organism>
<proteinExistence type="inferred from homology"/>